<comment type="function">
    <text evidence="2">Component of the ubiquinol-cytochrome c reductase complex (complex III or cytochrome b-c1 complex) that is part of the mitochondrial respiratory chain. The b-c1 complex mediates electron transfer from ubiquinol to cytochrome c. Contributes to the generation of a proton gradient across the mitochondrial membrane that is then used for ATP synthesis.</text>
</comment>
<comment type="cofactor">
    <cofactor evidence="2">
        <name>heme b</name>
        <dbReference type="ChEBI" id="CHEBI:60344"/>
    </cofactor>
    <text evidence="2">Binds 2 heme b groups non-covalently.</text>
</comment>
<comment type="subunit">
    <text evidence="2">The cytochrome bc1 complex contains 11 subunits: 3 respiratory subunits (MT-CYB, CYC1 and UQCRFS1), 2 core proteins (UQCRC1 and UQCRC2) and 6 low-molecular weight proteins (UQCRH/QCR6, UQCRB/QCR7, UQCRQ/QCR8, UQCR10/QCR9, UQCR11/QCR10 and a cleavage product of UQCRFS1). This cytochrome bc1 complex then forms a dimer.</text>
</comment>
<comment type="subcellular location">
    <subcellularLocation>
        <location evidence="2">Mitochondrion inner membrane</location>
        <topology evidence="2">Multi-pass membrane protein</topology>
    </subcellularLocation>
</comment>
<comment type="miscellaneous">
    <text evidence="1">Heme 1 (or BL or b562) is low-potential and absorbs at about 562 nm, and heme 2 (or BH or b566) is high-potential and absorbs at about 566 nm.</text>
</comment>
<comment type="similarity">
    <text evidence="3 4">Belongs to the cytochrome b family.</text>
</comment>
<comment type="caution">
    <text evidence="2">The full-length protein contains only eight transmembrane helices, not nine as predicted by bioinformatics tools.</text>
</comment>
<evidence type="ECO:0000250" key="1"/>
<evidence type="ECO:0000250" key="2">
    <source>
        <dbReference type="UniProtKB" id="P00157"/>
    </source>
</evidence>
<evidence type="ECO:0000255" key="3">
    <source>
        <dbReference type="PROSITE-ProRule" id="PRU00967"/>
    </source>
</evidence>
<evidence type="ECO:0000255" key="4">
    <source>
        <dbReference type="PROSITE-ProRule" id="PRU00968"/>
    </source>
</evidence>
<evidence type="ECO:0000305" key="5"/>
<keyword id="KW-0249">Electron transport</keyword>
<keyword id="KW-0349">Heme</keyword>
<keyword id="KW-0408">Iron</keyword>
<keyword id="KW-0472">Membrane</keyword>
<keyword id="KW-0479">Metal-binding</keyword>
<keyword id="KW-0496">Mitochondrion</keyword>
<keyword id="KW-0999">Mitochondrion inner membrane</keyword>
<keyword id="KW-0679">Respiratory chain</keyword>
<keyword id="KW-0812">Transmembrane</keyword>
<keyword id="KW-1133">Transmembrane helix</keyword>
<keyword id="KW-0813">Transport</keyword>
<keyword id="KW-0830">Ubiquinone</keyword>
<organism>
    <name type="scientific">Myotis pilosus</name>
    <name type="common">Rickett's big-footed bat</name>
    <name type="synonym">Myotis ricketti</name>
    <dbReference type="NCBI Taxonomy" id="203696"/>
    <lineage>
        <taxon>Eukaryota</taxon>
        <taxon>Metazoa</taxon>
        <taxon>Chordata</taxon>
        <taxon>Craniata</taxon>
        <taxon>Vertebrata</taxon>
        <taxon>Euteleostomi</taxon>
        <taxon>Mammalia</taxon>
        <taxon>Eutheria</taxon>
        <taxon>Laurasiatheria</taxon>
        <taxon>Chiroptera</taxon>
        <taxon>Yangochiroptera</taxon>
        <taxon>Vespertilionidae</taxon>
        <taxon>Myotis</taxon>
    </lineage>
</organism>
<protein>
    <recommendedName>
        <fullName>Cytochrome b</fullName>
    </recommendedName>
    <alternativeName>
        <fullName>Complex III subunit 3</fullName>
    </alternativeName>
    <alternativeName>
        <fullName>Complex III subunit III</fullName>
    </alternativeName>
    <alternativeName>
        <fullName>Cytochrome b-c1 complex subunit 3</fullName>
    </alternativeName>
    <alternativeName>
        <fullName>Ubiquinol-cytochrome-c reductase complex cytochrome b subunit</fullName>
    </alternativeName>
</protein>
<accession>Q7Y8L0</accession>
<accession>Q7YD71</accession>
<name>CYB_MYOPI</name>
<dbReference type="EMBL" id="AB106608">
    <property type="protein sequence ID" value="BAC77814.1"/>
    <property type="molecule type" value="Genomic_DNA"/>
</dbReference>
<dbReference type="EMBL" id="AJ504452">
    <property type="protein sequence ID" value="CAD43210.1"/>
    <property type="molecule type" value="Genomic_DNA"/>
</dbReference>
<dbReference type="SMR" id="Q7Y8L0"/>
<dbReference type="GO" id="GO:0005743">
    <property type="term" value="C:mitochondrial inner membrane"/>
    <property type="evidence" value="ECO:0007669"/>
    <property type="project" value="UniProtKB-SubCell"/>
</dbReference>
<dbReference type="GO" id="GO:0045275">
    <property type="term" value="C:respiratory chain complex III"/>
    <property type="evidence" value="ECO:0007669"/>
    <property type="project" value="InterPro"/>
</dbReference>
<dbReference type="GO" id="GO:0046872">
    <property type="term" value="F:metal ion binding"/>
    <property type="evidence" value="ECO:0007669"/>
    <property type="project" value="UniProtKB-KW"/>
</dbReference>
<dbReference type="GO" id="GO:0008121">
    <property type="term" value="F:ubiquinol-cytochrome-c reductase activity"/>
    <property type="evidence" value="ECO:0007669"/>
    <property type="project" value="InterPro"/>
</dbReference>
<dbReference type="GO" id="GO:0006122">
    <property type="term" value="P:mitochondrial electron transport, ubiquinol to cytochrome c"/>
    <property type="evidence" value="ECO:0007669"/>
    <property type="project" value="TreeGrafter"/>
</dbReference>
<dbReference type="CDD" id="cd00290">
    <property type="entry name" value="cytochrome_b_C"/>
    <property type="match status" value="1"/>
</dbReference>
<dbReference type="CDD" id="cd00284">
    <property type="entry name" value="Cytochrome_b_N"/>
    <property type="match status" value="1"/>
</dbReference>
<dbReference type="FunFam" id="1.20.810.10:FF:000002">
    <property type="entry name" value="Cytochrome b"/>
    <property type="match status" value="1"/>
</dbReference>
<dbReference type="Gene3D" id="1.20.810.10">
    <property type="entry name" value="Cytochrome Bc1 Complex, Chain C"/>
    <property type="match status" value="1"/>
</dbReference>
<dbReference type="InterPro" id="IPR005798">
    <property type="entry name" value="Cyt_b/b6_C"/>
</dbReference>
<dbReference type="InterPro" id="IPR036150">
    <property type="entry name" value="Cyt_b/b6_C_sf"/>
</dbReference>
<dbReference type="InterPro" id="IPR005797">
    <property type="entry name" value="Cyt_b/b6_N"/>
</dbReference>
<dbReference type="InterPro" id="IPR027387">
    <property type="entry name" value="Cytb/b6-like_sf"/>
</dbReference>
<dbReference type="InterPro" id="IPR030689">
    <property type="entry name" value="Cytochrome_b"/>
</dbReference>
<dbReference type="InterPro" id="IPR048260">
    <property type="entry name" value="Cytochrome_b_C_euk/bac"/>
</dbReference>
<dbReference type="InterPro" id="IPR048259">
    <property type="entry name" value="Cytochrome_b_N_euk/bac"/>
</dbReference>
<dbReference type="InterPro" id="IPR016174">
    <property type="entry name" value="Di-haem_cyt_TM"/>
</dbReference>
<dbReference type="PANTHER" id="PTHR19271">
    <property type="entry name" value="CYTOCHROME B"/>
    <property type="match status" value="1"/>
</dbReference>
<dbReference type="PANTHER" id="PTHR19271:SF16">
    <property type="entry name" value="CYTOCHROME B"/>
    <property type="match status" value="1"/>
</dbReference>
<dbReference type="Pfam" id="PF00032">
    <property type="entry name" value="Cytochrom_B_C"/>
    <property type="match status" value="1"/>
</dbReference>
<dbReference type="Pfam" id="PF00033">
    <property type="entry name" value="Cytochrome_B"/>
    <property type="match status" value="1"/>
</dbReference>
<dbReference type="PIRSF" id="PIRSF038885">
    <property type="entry name" value="COB"/>
    <property type="match status" value="1"/>
</dbReference>
<dbReference type="SUPFAM" id="SSF81648">
    <property type="entry name" value="a domain/subunit of cytochrome bc1 complex (Ubiquinol-cytochrome c reductase)"/>
    <property type="match status" value="1"/>
</dbReference>
<dbReference type="SUPFAM" id="SSF81342">
    <property type="entry name" value="Transmembrane di-heme cytochromes"/>
    <property type="match status" value="1"/>
</dbReference>
<dbReference type="PROSITE" id="PS51003">
    <property type="entry name" value="CYTB_CTER"/>
    <property type="match status" value="1"/>
</dbReference>
<dbReference type="PROSITE" id="PS51002">
    <property type="entry name" value="CYTB_NTER"/>
    <property type="match status" value="1"/>
</dbReference>
<feature type="chain" id="PRO_0000254730" description="Cytochrome b">
    <location>
        <begin position="1"/>
        <end position="379"/>
    </location>
</feature>
<feature type="transmembrane region" description="Helical" evidence="2">
    <location>
        <begin position="33"/>
        <end position="53"/>
    </location>
</feature>
<feature type="transmembrane region" description="Helical" evidence="2">
    <location>
        <begin position="77"/>
        <end position="98"/>
    </location>
</feature>
<feature type="transmembrane region" description="Helical" evidence="2">
    <location>
        <begin position="113"/>
        <end position="133"/>
    </location>
</feature>
<feature type="transmembrane region" description="Helical" evidence="2">
    <location>
        <begin position="178"/>
        <end position="198"/>
    </location>
</feature>
<feature type="transmembrane region" description="Helical" evidence="2">
    <location>
        <begin position="226"/>
        <end position="246"/>
    </location>
</feature>
<feature type="transmembrane region" description="Helical" evidence="2">
    <location>
        <begin position="288"/>
        <end position="308"/>
    </location>
</feature>
<feature type="transmembrane region" description="Helical" evidence="2">
    <location>
        <begin position="320"/>
        <end position="340"/>
    </location>
</feature>
<feature type="transmembrane region" description="Helical" evidence="2">
    <location>
        <begin position="347"/>
        <end position="367"/>
    </location>
</feature>
<feature type="binding site" description="axial binding residue" evidence="2">
    <location>
        <position position="83"/>
    </location>
    <ligand>
        <name>heme b</name>
        <dbReference type="ChEBI" id="CHEBI:60344"/>
        <label>b562</label>
    </ligand>
    <ligandPart>
        <name>Fe</name>
        <dbReference type="ChEBI" id="CHEBI:18248"/>
    </ligandPart>
</feature>
<feature type="binding site" description="axial binding residue" evidence="2">
    <location>
        <position position="97"/>
    </location>
    <ligand>
        <name>heme b</name>
        <dbReference type="ChEBI" id="CHEBI:60344"/>
        <label>b566</label>
    </ligand>
    <ligandPart>
        <name>Fe</name>
        <dbReference type="ChEBI" id="CHEBI:18248"/>
    </ligandPart>
</feature>
<feature type="binding site" description="axial binding residue" evidence="2">
    <location>
        <position position="182"/>
    </location>
    <ligand>
        <name>heme b</name>
        <dbReference type="ChEBI" id="CHEBI:60344"/>
        <label>b562</label>
    </ligand>
    <ligandPart>
        <name>Fe</name>
        <dbReference type="ChEBI" id="CHEBI:18248"/>
    </ligandPart>
</feature>
<feature type="binding site" description="axial binding residue" evidence="2">
    <location>
        <position position="196"/>
    </location>
    <ligand>
        <name>heme b</name>
        <dbReference type="ChEBI" id="CHEBI:60344"/>
        <label>b566</label>
    </ligand>
    <ligandPart>
        <name>Fe</name>
        <dbReference type="ChEBI" id="CHEBI:18248"/>
    </ligandPart>
</feature>
<feature type="binding site" evidence="2">
    <location>
        <position position="201"/>
    </location>
    <ligand>
        <name>a ubiquinone</name>
        <dbReference type="ChEBI" id="CHEBI:16389"/>
    </ligand>
</feature>
<feature type="sequence conflict" description="In Ref. 2; CAD43210." evidence="5" ref="2">
    <original>M</original>
    <variation>T</variation>
    <location>
        <position position="215"/>
    </location>
</feature>
<reference key="1">
    <citation type="journal article" date="2003" name="Mol. Phylogenet. Evol.">
        <title>The status of the Japanese and East Asian bats of the genus Myotis (Vespertilionidae) based on mitochondrial sequences.</title>
        <authorList>
            <person name="Kawai K."/>
            <person name="Nikaido M."/>
            <person name="Harada M."/>
            <person name="Matsumura S."/>
            <person name="Lin L."/>
            <person name="Wu Y."/>
            <person name="Hasegawa M."/>
            <person name="Okada N."/>
        </authorList>
    </citation>
    <scope>NUCLEOTIDE SEQUENCE [GENOMIC DNA]</scope>
</reference>
<reference key="2">
    <citation type="journal article" date="2004" name="J. Mammal.">
        <title>Molecular systematics of the fishing bat Myotis (Pizonyx) vivesi.</title>
        <authorList>
            <person name="Stadelmann B.Y."/>
            <person name="Herrera L.G."/>
            <person name="Arroyo-Cabrales J."/>
            <person name="Flores-Martinez J.J."/>
            <person name="May B.P."/>
            <person name="Ruedi M."/>
        </authorList>
    </citation>
    <scope>NUCLEOTIDE SEQUENCE [GENOMIC DNA]</scope>
    <source>
        <tissue>Wing</tissue>
    </source>
</reference>
<geneLocation type="mitochondrion"/>
<proteinExistence type="inferred from homology"/>
<gene>
    <name type="primary">MT-CYB</name>
    <name type="synonym">COB</name>
    <name type="synonym">CYTB</name>
    <name type="synonym">MTCYB</name>
</gene>
<sequence>MTNIRKSHPLMKIINSSFIDLPAPSNISSWWNFGSLLGICLALQILTGLFLAMHYTSDTATAFNSVTHICRDVNYGWILRYLHANGASMFFICLYLHVGRGLYYGSYMYTETWNIGVILLFAVMATAFMGYVLPWGQMSFWGATVITNLLSAIPYIGTDLVEWIWGGFSVDKATLTRFFAFHFLLPFIISAMVMVHLLFLHETGSNNPTGIPSNMDMIPFHPYYTIKDILGMLLMIMTLLTLVLFSPDMLGDPDNYTPANPLNTPPHIKPEWYFLFAYAILRSIPNKLGGVLALVLSILILIIIPLLHTSKQRSMTFRPLSQCLFWLLAADLLTLTWIGGQPVEHPYVIIGQLASILYFSIIIILMPLTSLVENHLLKW</sequence>